<protein>
    <recommendedName>
        <fullName>Shikimate kinase</fullName>
        <shortName>SK</shortName>
        <ecNumber>2.7.1.71</ecNumber>
    </recommendedName>
</protein>
<feature type="chain" id="PRO_0000141570" description="Shikimate kinase">
    <location>
        <begin position="1"/>
        <end position="280"/>
    </location>
</feature>
<feature type="binding site" evidence="2">
    <location>
        <begin position="86"/>
        <end position="96"/>
    </location>
    <ligand>
        <name>ATP</name>
        <dbReference type="ChEBI" id="CHEBI:30616"/>
    </ligand>
</feature>
<organism>
    <name type="scientific">Aeropyrum pernix (strain ATCC 700893 / DSM 11879 / JCM 9820 / NBRC 100138 / K1)</name>
    <dbReference type="NCBI Taxonomy" id="272557"/>
    <lineage>
        <taxon>Archaea</taxon>
        <taxon>Thermoproteota</taxon>
        <taxon>Thermoprotei</taxon>
        <taxon>Desulfurococcales</taxon>
        <taxon>Desulfurococcaceae</taxon>
        <taxon>Aeropyrum</taxon>
    </lineage>
</organism>
<sequence>MARARASGGLTIVNAIGHGRLGGAAGLGLWVESRVREARGLWAGVSLTPRGERRLPPRVLEAAATAACSLGACVEGLEAEVHTGFPPGVGLKGSAALLASLVEAVLRLKGVRAPPWRAALAAARVSRGAGLSVTGALDDHAASLLEAPVITDNRGMAILRLLPRDGCRLTAVIGVPGVENPVENLDPSPFRRHSRLYDAAARLGLAGEWLPAMAVSGVAGALALGVEGLASRLYEAGAAAAGVTGKGPAVFALTERPRGAAEVLETAGYEVVEARFKWCG</sequence>
<evidence type="ECO:0000250" key="1"/>
<evidence type="ECO:0000255" key="2"/>
<evidence type="ECO:0000305" key="3"/>
<name>AROK_AERPE</name>
<reference key="1">
    <citation type="journal article" date="1999" name="DNA Res.">
        <title>Complete genome sequence of an aerobic hyper-thermophilic crenarchaeon, Aeropyrum pernix K1.</title>
        <authorList>
            <person name="Kawarabayasi Y."/>
            <person name="Hino Y."/>
            <person name="Horikawa H."/>
            <person name="Yamazaki S."/>
            <person name="Haikawa Y."/>
            <person name="Jin-no K."/>
            <person name="Takahashi M."/>
            <person name="Sekine M."/>
            <person name="Baba S."/>
            <person name="Ankai A."/>
            <person name="Kosugi H."/>
            <person name="Hosoyama A."/>
            <person name="Fukui S."/>
            <person name="Nagai Y."/>
            <person name="Nishijima K."/>
            <person name="Nakazawa H."/>
            <person name="Takamiya M."/>
            <person name="Masuda S."/>
            <person name="Funahashi T."/>
            <person name="Tanaka T."/>
            <person name="Kudoh Y."/>
            <person name="Yamazaki J."/>
            <person name="Kushida N."/>
            <person name="Oguchi A."/>
            <person name="Aoki K."/>
            <person name="Kubota K."/>
            <person name="Nakamura Y."/>
            <person name="Nomura N."/>
            <person name="Sako Y."/>
            <person name="Kikuchi H."/>
        </authorList>
    </citation>
    <scope>NUCLEOTIDE SEQUENCE [LARGE SCALE GENOMIC DNA]</scope>
    <source>
        <strain>ATCC 700893 / DSM 11879 / JCM 9820 / NBRC 100138 / K1</strain>
    </source>
</reference>
<accession>Q9YEK6</accession>
<keyword id="KW-0028">Amino-acid biosynthesis</keyword>
<keyword id="KW-0057">Aromatic amino acid biosynthesis</keyword>
<keyword id="KW-0067">ATP-binding</keyword>
<keyword id="KW-0963">Cytoplasm</keyword>
<keyword id="KW-0418">Kinase</keyword>
<keyword id="KW-0547">Nucleotide-binding</keyword>
<keyword id="KW-1185">Reference proteome</keyword>
<keyword id="KW-0808">Transferase</keyword>
<gene>
    <name type="primary">aroK</name>
    <name type="ordered locus">APE_0572</name>
</gene>
<comment type="catalytic activity">
    <reaction>
        <text>shikimate + ATP = 3-phosphoshikimate + ADP + H(+)</text>
        <dbReference type="Rhea" id="RHEA:13121"/>
        <dbReference type="ChEBI" id="CHEBI:15378"/>
        <dbReference type="ChEBI" id="CHEBI:30616"/>
        <dbReference type="ChEBI" id="CHEBI:36208"/>
        <dbReference type="ChEBI" id="CHEBI:145989"/>
        <dbReference type="ChEBI" id="CHEBI:456216"/>
        <dbReference type="EC" id="2.7.1.71"/>
    </reaction>
</comment>
<comment type="pathway">
    <text>Metabolic intermediate biosynthesis; chorismate biosynthesis; chorismate from D-erythrose 4-phosphate and phosphoenolpyruvate: step 5/7.</text>
</comment>
<comment type="subcellular location">
    <subcellularLocation>
        <location evidence="1">Cytoplasm</location>
    </subcellularLocation>
</comment>
<comment type="similarity">
    <text evidence="3">Belongs to the GHMP kinase family. Archaeal shikimate kinase subfamily.</text>
</comment>
<proteinExistence type="inferred from homology"/>
<dbReference type="EC" id="2.7.1.71"/>
<dbReference type="EMBL" id="BA000002">
    <property type="protein sequence ID" value="BAA79540.1"/>
    <property type="molecule type" value="Genomic_DNA"/>
</dbReference>
<dbReference type="PIR" id="D72642">
    <property type="entry name" value="D72642"/>
</dbReference>
<dbReference type="RefSeq" id="WP_010865840.1">
    <property type="nucleotide sequence ID" value="NC_000854.2"/>
</dbReference>
<dbReference type="SMR" id="Q9YEK6"/>
<dbReference type="STRING" id="272557.APE_0572"/>
<dbReference type="EnsemblBacteria" id="BAA79540">
    <property type="protein sequence ID" value="BAA79540"/>
    <property type="gene ID" value="APE_0572"/>
</dbReference>
<dbReference type="GeneID" id="1444732"/>
<dbReference type="KEGG" id="ape:APE_0572"/>
<dbReference type="eggNOG" id="arCOG01025">
    <property type="taxonomic scope" value="Archaea"/>
</dbReference>
<dbReference type="UniPathway" id="UPA00053">
    <property type="reaction ID" value="UER00088"/>
</dbReference>
<dbReference type="Proteomes" id="UP000002518">
    <property type="component" value="Chromosome"/>
</dbReference>
<dbReference type="GO" id="GO:0005737">
    <property type="term" value="C:cytoplasm"/>
    <property type="evidence" value="ECO:0007669"/>
    <property type="project" value="UniProtKB-SubCell"/>
</dbReference>
<dbReference type="GO" id="GO:0005524">
    <property type="term" value="F:ATP binding"/>
    <property type="evidence" value="ECO:0007669"/>
    <property type="project" value="UniProtKB-UniRule"/>
</dbReference>
<dbReference type="GO" id="GO:0004765">
    <property type="term" value="F:shikimate kinase activity"/>
    <property type="evidence" value="ECO:0007669"/>
    <property type="project" value="UniProtKB-UniRule"/>
</dbReference>
<dbReference type="GO" id="GO:0008652">
    <property type="term" value="P:amino acid biosynthetic process"/>
    <property type="evidence" value="ECO:0007669"/>
    <property type="project" value="UniProtKB-KW"/>
</dbReference>
<dbReference type="GO" id="GO:0009073">
    <property type="term" value="P:aromatic amino acid family biosynthetic process"/>
    <property type="evidence" value="ECO:0007669"/>
    <property type="project" value="UniProtKB-KW"/>
</dbReference>
<dbReference type="GO" id="GO:0009423">
    <property type="term" value="P:chorismate biosynthetic process"/>
    <property type="evidence" value="ECO:0007669"/>
    <property type="project" value="UniProtKB-UniRule"/>
</dbReference>
<dbReference type="Gene3D" id="3.30.230.10">
    <property type="match status" value="1"/>
</dbReference>
<dbReference type="HAMAP" id="MF_00370">
    <property type="entry name" value="Shik_kinase_arch"/>
    <property type="match status" value="1"/>
</dbReference>
<dbReference type="InterPro" id="IPR013750">
    <property type="entry name" value="GHMP_kinase_C_dom"/>
</dbReference>
<dbReference type="InterPro" id="IPR006204">
    <property type="entry name" value="GHMP_kinase_N_dom"/>
</dbReference>
<dbReference type="InterPro" id="IPR020568">
    <property type="entry name" value="Ribosomal_Su5_D2-typ_SF"/>
</dbReference>
<dbReference type="InterPro" id="IPR014721">
    <property type="entry name" value="Ribsml_uS5_D2-typ_fold_subgr"/>
</dbReference>
<dbReference type="InterPro" id="IPR010189">
    <property type="entry name" value="SK_arc"/>
</dbReference>
<dbReference type="NCBIfam" id="TIGR01920">
    <property type="entry name" value="Shik_kin_archae"/>
    <property type="match status" value="1"/>
</dbReference>
<dbReference type="PANTHER" id="PTHR20861:SF1">
    <property type="entry name" value="HOMOSERINE KINASE"/>
    <property type="match status" value="1"/>
</dbReference>
<dbReference type="PANTHER" id="PTHR20861">
    <property type="entry name" value="HOMOSERINE/4-DIPHOSPHOCYTIDYL-2-C-METHYL-D-ERYTHRITOL KINASE"/>
    <property type="match status" value="1"/>
</dbReference>
<dbReference type="Pfam" id="PF08544">
    <property type="entry name" value="GHMP_kinases_C"/>
    <property type="match status" value="1"/>
</dbReference>
<dbReference type="Pfam" id="PF00288">
    <property type="entry name" value="GHMP_kinases_N"/>
    <property type="match status" value="1"/>
</dbReference>
<dbReference type="PIRSF" id="PIRSF005758">
    <property type="entry name" value="Shikimt_kin_arch"/>
    <property type="match status" value="1"/>
</dbReference>
<dbReference type="SUPFAM" id="SSF54211">
    <property type="entry name" value="Ribosomal protein S5 domain 2-like"/>
    <property type="match status" value="1"/>
</dbReference>